<feature type="chain" id="PRO_0000111775" description="Uncharacterized HTH-type transcriptional regulator PH1692">
    <location>
        <begin position="1"/>
        <end position="148"/>
    </location>
</feature>
<feature type="domain" description="HTH asnC-type" evidence="1">
    <location>
        <begin position="3"/>
        <end position="64"/>
    </location>
</feature>
<feature type="DNA-binding region" description="H-T-H motif" evidence="1">
    <location>
        <begin position="22"/>
        <end position="41"/>
    </location>
</feature>
<dbReference type="EMBL" id="BA000001">
    <property type="protein sequence ID" value="BAA30804.1"/>
    <property type="status" value="ALT_INIT"/>
    <property type="molecule type" value="Genomic_DNA"/>
</dbReference>
<dbReference type="PIR" id="E71176">
    <property type="entry name" value="E71176"/>
</dbReference>
<dbReference type="RefSeq" id="WP_048053457.1">
    <property type="nucleotide sequence ID" value="NC_000961.1"/>
</dbReference>
<dbReference type="SMR" id="O59309"/>
<dbReference type="MINT" id="O59309"/>
<dbReference type="STRING" id="70601.gene:9378686"/>
<dbReference type="EnsemblBacteria" id="BAA30804">
    <property type="protein sequence ID" value="BAA30804"/>
    <property type="gene ID" value="BAA30804"/>
</dbReference>
<dbReference type="GeneID" id="1442537"/>
<dbReference type="KEGG" id="pho:PH1692"/>
<dbReference type="eggNOG" id="arCOG01580">
    <property type="taxonomic scope" value="Archaea"/>
</dbReference>
<dbReference type="OrthoDB" id="6995at2157"/>
<dbReference type="Proteomes" id="UP000000752">
    <property type="component" value="Chromosome"/>
</dbReference>
<dbReference type="GO" id="GO:0005829">
    <property type="term" value="C:cytosol"/>
    <property type="evidence" value="ECO:0007669"/>
    <property type="project" value="TreeGrafter"/>
</dbReference>
<dbReference type="GO" id="GO:0043565">
    <property type="term" value="F:sequence-specific DNA binding"/>
    <property type="evidence" value="ECO:0007669"/>
    <property type="project" value="InterPro"/>
</dbReference>
<dbReference type="GO" id="GO:0043200">
    <property type="term" value="P:response to amino acid"/>
    <property type="evidence" value="ECO:0007669"/>
    <property type="project" value="TreeGrafter"/>
</dbReference>
<dbReference type="CDD" id="cd00090">
    <property type="entry name" value="HTH_ARSR"/>
    <property type="match status" value="1"/>
</dbReference>
<dbReference type="Gene3D" id="3.30.70.920">
    <property type="match status" value="1"/>
</dbReference>
<dbReference type="Gene3D" id="1.10.10.10">
    <property type="entry name" value="Winged helix-like DNA-binding domain superfamily/Winged helix DNA-binding domain"/>
    <property type="match status" value="1"/>
</dbReference>
<dbReference type="InterPro" id="IPR011991">
    <property type="entry name" value="ArsR-like_HTH"/>
</dbReference>
<dbReference type="InterPro" id="IPR000485">
    <property type="entry name" value="AsnC-type_HTH_dom"/>
</dbReference>
<dbReference type="InterPro" id="IPR011008">
    <property type="entry name" value="Dimeric_a/b-barrel"/>
</dbReference>
<dbReference type="InterPro" id="IPR019888">
    <property type="entry name" value="Tscrpt_reg_AsnC-like"/>
</dbReference>
<dbReference type="InterPro" id="IPR019887">
    <property type="entry name" value="Tscrpt_reg_AsnC/Lrp_C"/>
</dbReference>
<dbReference type="InterPro" id="IPR036388">
    <property type="entry name" value="WH-like_DNA-bd_sf"/>
</dbReference>
<dbReference type="InterPro" id="IPR036390">
    <property type="entry name" value="WH_DNA-bd_sf"/>
</dbReference>
<dbReference type="PANTHER" id="PTHR30154">
    <property type="entry name" value="LEUCINE-RESPONSIVE REGULATORY PROTEIN"/>
    <property type="match status" value="1"/>
</dbReference>
<dbReference type="PANTHER" id="PTHR30154:SF34">
    <property type="entry name" value="TRANSCRIPTIONAL REGULATOR AZLB"/>
    <property type="match status" value="1"/>
</dbReference>
<dbReference type="Pfam" id="PF01037">
    <property type="entry name" value="AsnC_trans_reg"/>
    <property type="match status" value="1"/>
</dbReference>
<dbReference type="Pfam" id="PF13412">
    <property type="entry name" value="HTH_24"/>
    <property type="match status" value="1"/>
</dbReference>
<dbReference type="PRINTS" id="PR00033">
    <property type="entry name" value="HTHASNC"/>
</dbReference>
<dbReference type="SMART" id="SM00344">
    <property type="entry name" value="HTH_ASNC"/>
    <property type="match status" value="1"/>
</dbReference>
<dbReference type="SUPFAM" id="SSF54909">
    <property type="entry name" value="Dimeric alpha+beta barrel"/>
    <property type="match status" value="1"/>
</dbReference>
<dbReference type="SUPFAM" id="SSF46785">
    <property type="entry name" value="Winged helix' DNA-binding domain"/>
    <property type="match status" value="1"/>
</dbReference>
<dbReference type="PROSITE" id="PS50956">
    <property type="entry name" value="HTH_ASNC_2"/>
    <property type="match status" value="1"/>
</dbReference>
<keyword id="KW-0238">DNA-binding</keyword>
<keyword id="KW-0804">Transcription</keyword>
<keyword id="KW-0805">Transcription regulation</keyword>
<comment type="sequence caution" evidence="2">
    <conflict type="erroneous initiation">
        <sequence resource="EMBL-CDS" id="BAA30804"/>
    </conflict>
</comment>
<reference key="1">
    <citation type="journal article" date="1998" name="DNA Res.">
        <title>Complete sequence and gene organization of the genome of a hyper-thermophilic archaebacterium, Pyrococcus horikoshii OT3.</title>
        <authorList>
            <person name="Kawarabayasi Y."/>
            <person name="Sawada M."/>
            <person name="Horikawa H."/>
            <person name="Haikawa Y."/>
            <person name="Hino Y."/>
            <person name="Yamamoto S."/>
            <person name="Sekine M."/>
            <person name="Baba S."/>
            <person name="Kosugi H."/>
            <person name="Hosoyama A."/>
            <person name="Nagai Y."/>
            <person name="Sakai M."/>
            <person name="Ogura K."/>
            <person name="Otsuka R."/>
            <person name="Nakazawa H."/>
            <person name="Takamiya M."/>
            <person name="Ohfuku Y."/>
            <person name="Funahashi T."/>
            <person name="Tanaka T."/>
            <person name="Kudoh Y."/>
            <person name="Yamazaki J."/>
            <person name="Kushida N."/>
            <person name="Oguchi A."/>
            <person name="Aoki K."/>
            <person name="Yoshizawa T."/>
            <person name="Nakamura Y."/>
            <person name="Robb F.T."/>
            <person name="Horikoshi K."/>
            <person name="Masuchi Y."/>
            <person name="Shizuya H."/>
            <person name="Kikuchi H."/>
        </authorList>
    </citation>
    <scope>NUCLEOTIDE SEQUENCE [LARGE SCALE GENOMIC DNA]</scope>
    <source>
        <strain>ATCC 700860 / DSM 12428 / JCM 9974 / NBRC 100139 / OT-3</strain>
    </source>
</reference>
<gene>
    <name type="ordered locus">PH1692</name>
</gene>
<protein>
    <recommendedName>
        <fullName>Uncharacterized HTH-type transcriptional regulator PH1692</fullName>
    </recommendedName>
</protein>
<evidence type="ECO:0000255" key="1">
    <source>
        <dbReference type="PROSITE-ProRule" id="PRU00319"/>
    </source>
</evidence>
<evidence type="ECO:0000305" key="2"/>
<name>REG8_PYRHO</name>
<sequence>MELDALDRKILEILLKDSRTSYREIAKDLNVAVGTIYNRIKKLEDSGVIQAFTVKLNYESIGYDLTAIIGIKAQGKKIREIERIIAKDKRVTCVYDVTGEYDIIVIAKFRNREDMNRFVKGVLSIDGVEKTNTHVVLEIVKEDFRLEP</sequence>
<proteinExistence type="predicted"/>
<organism>
    <name type="scientific">Pyrococcus horikoshii (strain ATCC 700860 / DSM 12428 / JCM 9974 / NBRC 100139 / OT-3)</name>
    <dbReference type="NCBI Taxonomy" id="70601"/>
    <lineage>
        <taxon>Archaea</taxon>
        <taxon>Methanobacteriati</taxon>
        <taxon>Methanobacteriota</taxon>
        <taxon>Thermococci</taxon>
        <taxon>Thermococcales</taxon>
        <taxon>Thermococcaceae</taxon>
        <taxon>Pyrococcus</taxon>
    </lineage>
</organism>
<accession>O59309</accession>